<name>BAMA_ECOLU</name>
<gene>
    <name evidence="1" type="primary">bamA</name>
    <name type="synonym">yaeT</name>
    <name type="ordered locus">ECUMN_0174</name>
</gene>
<sequence length="810" mass="90553">MAMKKLLIASLLFSSATVYGAEGFVVKDIHFEGLQRVAVGAALLSMPVRTGDTVNDEDISNTIRALFATGNFEDVRVLRDGDTLLVQVKERPTIASITFSGNKSVKDDMLKQNLEASGVRVGESLDRTTIADIEKGLEDFYYSVGKYSASVKAVVTPLPRNRVDLKLVFQEGVSAEIQQINIVGNHAFTTDELISHFQLRDEVPWWNVVGDRKYQKQKLAGDLETLRSYYLDRGYARFNIDSTQVSLTPDKKGIYVTVNITEGDQYKLSGVEVSGNLAGHSAEIEQLTKIEPGELYNGTKVTKMEDDIKKLLGRYGYAYPRVQSMPEINDADKTVKLRVNVDAGNRFYVRKIRFEGNDTSKDAVLRREMRQMEGAWLGSDLVDQGKERLNRLGFFETVDTDTQRVPGSPDQVDVVYKVKERNTGSFNFGIGYGTESGVSFQAGVQQDNWLGTGYAVGINGTKNDYQTYAELSVTNPYFTVDGVSLGGRLFYNDFQADDADLSDYTNKSYGTDVTLGFPINEYNSLRAGLGYVHNSLSNMQPQVAMWRYLYSMGEHPSTSDQDNSFKTDDFTFNYGWTYNKLDRGYFPTDGSRVNLTGKVTIPGSDNEYYKVTLDTATYVPIDDDHKWVVLGRTRWGYGDGLGGKEMPFYENFYAGGSSTVRGFQSNTIGPKAVYFPHQASNYDPDYDYECATQDGAKDLCKSDDAVGGNAMAVASLEFITPTPFISDKYANSVRTSFFWDMGTVWDTNWDSSQYSGYPDYSDPSNIRMSAGIALQWMSPLGPLVFSYAQPFKKYDGDKAEQFQFNIGKTW</sequence>
<comment type="function">
    <text evidence="1">Part of the outer membrane protein assembly complex, which is involved in assembly and insertion of beta-barrel proteins into the outer membrane. Constitutes, with BamD, the core component of the assembly machinery.</text>
</comment>
<comment type="subunit">
    <text evidence="1">Part of the Bam complex, which is composed of the outer membrane protein BamA, and four lipoproteins BamB, BamC, BamD and BamE.</text>
</comment>
<comment type="subcellular location">
    <subcellularLocation>
        <location evidence="1">Cell outer membrane</location>
    </subcellularLocation>
</comment>
<comment type="similarity">
    <text evidence="1">Belongs to the BamA family.</text>
</comment>
<protein>
    <recommendedName>
        <fullName evidence="1">Outer membrane protein assembly factor BamA</fullName>
    </recommendedName>
</protein>
<evidence type="ECO:0000255" key="1">
    <source>
        <dbReference type="HAMAP-Rule" id="MF_01430"/>
    </source>
</evidence>
<evidence type="ECO:0000255" key="2">
    <source>
        <dbReference type="PROSITE-ProRule" id="PRU01115"/>
    </source>
</evidence>
<proteinExistence type="inferred from homology"/>
<keyword id="KW-0998">Cell outer membrane</keyword>
<keyword id="KW-0472">Membrane</keyword>
<keyword id="KW-0677">Repeat</keyword>
<keyword id="KW-0732">Signal</keyword>
<keyword id="KW-0812">Transmembrane</keyword>
<keyword id="KW-1134">Transmembrane beta strand</keyword>
<feature type="signal peptide" evidence="1">
    <location>
        <begin position="1"/>
        <end position="20"/>
    </location>
</feature>
<feature type="chain" id="PRO_1000145775" description="Outer membrane protein assembly factor BamA">
    <location>
        <begin position="21"/>
        <end position="810"/>
    </location>
</feature>
<feature type="domain" description="POTRA 1" evidence="2">
    <location>
        <begin position="24"/>
        <end position="91"/>
    </location>
</feature>
<feature type="domain" description="POTRA 2" evidence="2">
    <location>
        <begin position="92"/>
        <end position="172"/>
    </location>
</feature>
<feature type="domain" description="POTRA 3" evidence="2">
    <location>
        <begin position="175"/>
        <end position="263"/>
    </location>
</feature>
<feature type="domain" description="POTRA 4" evidence="2">
    <location>
        <begin position="266"/>
        <end position="344"/>
    </location>
</feature>
<feature type="domain" description="POTRA 5" evidence="2">
    <location>
        <begin position="347"/>
        <end position="421"/>
    </location>
</feature>
<reference key="1">
    <citation type="journal article" date="2009" name="PLoS Genet.">
        <title>Organised genome dynamics in the Escherichia coli species results in highly diverse adaptive paths.</title>
        <authorList>
            <person name="Touchon M."/>
            <person name="Hoede C."/>
            <person name="Tenaillon O."/>
            <person name="Barbe V."/>
            <person name="Baeriswyl S."/>
            <person name="Bidet P."/>
            <person name="Bingen E."/>
            <person name="Bonacorsi S."/>
            <person name="Bouchier C."/>
            <person name="Bouvet O."/>
            <person name="Calteau A."/>
            <person name="Chiapello H."/>
            <person name="Clermont O."/>
            <person name="Cruveiller S."/>
            <person name="Danchin A."/>
            <person name="Diard M."/>
            <person name="Dossat C."/>
            <person name="Karoui M.E."/>
            <person name="Frapy E."/>
            <person name="Garry L."/>
            <person name="Ghigo J.M."/>
            <person name="Gilles A.M."/>
            <person name="Johnson J."/>
            <person name="Le Bouguenec C."/>
            <person name="Lescat M."/>
            <person name="Mangenot S."/>
            <person name="Martinez-Jehanne V."/>
            <person name="Matic I."/>
            <person name="Nassif X."/>
            <person name="Oztas S."/>
            <person name="Petit M.A."/>
            <person name="Pichon C."/>
            <person name="Rouy Z."/>
            <person name="Ruf C.S."/>
            <person name="Schneider D."/>
            <person name="Tourret J."/>
            <person name="Vacherie B."/>
            <person name="Vallenet D."/>
            <person name="Medigue C."/>
            <person name="Rocha E.P.C."/>
            <person name="Denamur E."/>
        </authorList>
    </citation>
    <scope>NUCLEOTIDE SEQUENCE [LARGE SCALE GENOMIC DNA]</scope>
    <source>
        <strain>UMN026 / ExPEC</strain>
    </source>
</reference>
<dbReference type="EMBL" id="CU928163">
    <property type="protein sequence ID" value="CAR11394.1"/>
    <property type="molecule type" value="Genomic_DNA"/>
</dbReference>
<dbReference type="RefSeq" id="WP_001240896.1">
    <property type="nucleotide sequence ID" value="NC_011751.1"/>
</dbReference>
<dbReference type="RefSeq" id="YP_002410950.1">
    <property type="nucleotide sequence ID" value="NC_011751.1"/>
</dbReference>
<dbReference type="SMR" id="B7N844"/>
<dbReference type="STRING" id="585056.ECUMN_0174"/>
<dbReference type="GeneID" id="93777248"/>
<dbReference type="KEGG" id="eum:ECUMN_0174"/>
<dbReference type="PATRIC" id="fig|585056.7.peg.368"/>
<dbReference type="HOGENOM" id="CLU_007664_1_0_6"/>
<dbReference type="Proteomes" id="UP000007097">
    <property type="component" value="Chromosome"/>
</dbReference>
<dbReference type="GO" id="GO:1990063">
    <property type="term" value="C:Bam protein complex"/>
    <property type="evidence" value="ECO:0007669"/>
    <property type="project" value="TreeGrafter"/>
</dbReference>
<dbReference type="GO" id="GO:0043165">
    <property type="term" value="P:Gram-negative-bacterium-type cell outer membrane assembly"/>
    <property type="evidence" value="ECO:0007669"/>
    <property type="project" value="UniProtKB-UniRule"/>
</dbReference>
<dbReference type="GO" id="GO:0051205">
    <property type="term" value="P:protein insertion into membrane"/>
    <property type="evidence" value="ECO:0007669"/>
    <property type="project" value="UniProtKB-UniRule"/>
</dbReference>
<dbReference type="FunFam" id="2.40.160.50:FF:000001">
    <property type="entry name" value="Outer membrane protein assembly factor BamA"/>
    <property type="match status" value="1"/>
</dbReference>
<dbReference type="FunFam" id="3.10.20.310:FF:000001">
    <property type="entry name" value="Outer membrane protein assembly factor BamA"/>
    <property type="match status" value="1"/>
</dbReference>
<dbReference type="FunFam" id="3.10.20.310:FF:000002">
    <property type="entry name" value="Outer membrane protein assembly factor BamA"/>
    <property type="match status" value="1"/>
</dbReference>
<dbReference type="FunFam" id="3.10.20.310:FF:000003">
    <property type="entry name" value="Outer membrane protein assembly factor BamA"/>
    <property type="match status" value="1"/>
</dbReference>
<dbReference type="FunFam" id="3.10.20.310:FF:000004">
    <property type="entry name" value="Outer membrane protein assembly factor BamA"/>
    <property type="match status" value="1"/>
</dbReference>
<dbReference type="FunFam" id="3.10.20.310:FF:000005">
    <property type="entry name" value="Outer membrane protein assembly factor BamA"/>
    <property type="match status" value="1"/>
</dbReference>
<dbReference type="Gene3D" id="3.10.20.310">
    <property type="entry name" value="membrane protein fhac"/>
    <property type="match status" value="5"/>
</dbReference>
<dbReference type="Gene3D" id="2.40.160.50">
    <property type="entry name" value="membrane protein fhac: a member of the omp85/tpsb transporter family"/>
    <property type="match status" value="1"/>
</dbReference>
<dbReference type="HAMAP" id="MF_01430">
    <property type="entry name" value="OM_assembly_BamA"/>
    <property type="match status" value="1"/>
</dbReference>
<dbReference type="InterPro" id="IPR000184">
    <property type="entry name" value="Bac_surfAg_D15"/>
</dbReference>
<dbReference type="InterPro" id="IPR010827">
    <property type="entry name" value="BamA/TamA_POTRA"/>
</dbReference>
<dbReference type="InterPro" id="IPR039910">
    <property type="entry name" value="D15-like"/>
</dbReference>
<dbReference type="InterPro" id="IPR023707">
    <property type="entry name" value="OM_assembly_BamA"/>
</dbReference>
<dbReference type="InterPro" id="IPR034746">
    <property type="entry name" value="POTRA"/>
</dbReference>
<dbReference type="NCBIfam" id="TIGR03303">
    <property type="entry name" value="OM_YaeT"/>
    <property type="match status" value="1"/>
</dbReference>
<dbReference type="NCBIfam" id="NF008287">
    <property type="entry name" value="PRK11067.1"/>
    <property type="match status" value="1"/>
</dbReference>
<dbReference type="PANTHER" id="PTHR12815:SF23">
    <property type="entry name" value="OUTER MEMBRANE PROTEIN ASSEMBLY FACTOR BAMA"/>
    <property type="match status" value="1"/>
</dbReference>
<dbReference type="PANTHER" id="PTHR12815">
    <property type="entry name" value="SORTING AND ASSEMBLY MACHINERY SAMM50 PROTEIN FAMILY MEMBER"/>
    <property type="match status" value="1"/>
</dbReference>
<dbReference type="Pfam" id="PF01103">
    <property type="entry name" value="Omp85"/>
    <property type="match status" value="1"/>
</dbReference>
<dbReference type="Pfam" id="PF07244">
    <property type="entry name" value="POTRA"/>
    <property type="match status" value="4"/>
</dbReference>
<dbReference type="PIRSF" id="PIRSF006076">
    <property type="entry name" value="OM_assembly_OMP85"/>
    <property type="match status" value="1"/>
</dbReference>
<dbReference type="PROSITE" id="PS51779">
    <property type="entry name" value="POTRA"/>
    <property type="match status" value="5"/>
</dbReference>
<accession>B7N844</accession>
<organism>
    <name type="scientific">Escherichia coli O17:K52:H18 (strain UMN026 / ExPEC)</name>
    <dbReference type="NCBI Taxonomy" id="585056"/>
    <lineage>
        <taxon>Bacteria</taxon>
        <taxon>Pseudomonadati</taxon>
        <taxon>Pseudomonadota</taxon>
        <taxon>Gammaproteobacteria</taxon>
        <taxon>Enterobacterales</taxon>
        <taxon>Enterobacteriaceae</taxon>
        <taxon>Escherichia</taxon>
    </lineage>
</organism>